<evidence type="ECO:0000255" key="1">
    <source>
        <dbReference type="HAMAP-Rule" id="MF_01368"/>
    </source>
</evidence>
<evidence type="ECO:0000305" key="2"/>
<reference key="1">
    <citation type="journal article" date="2011" name="J. Bacteriol.">
        <title>Comparative genomics of 28 Salmonella enterica isolates: evidence for CRISPR-mediated adaptive sublineage evolution.</title>
        <authorList>
            <person name="Fricke W.F."/>
            <person name="Mammel M.K."/>
            <person name="McDermott P.F."/>
            <person name="Tartera C."/>
            <person name="White D.G."/>
            <person name="Leclerc J.E."/>
            <person name="Ravel J."/>
            <person name="Cebula T.A."/>
        </authorList>
    </citation>
    <scope>NUCLEOTIDE SEQUENCE [LARGE SCALE GENOMIC DNA]</scope>
    <source>
        <strain>CT_02021853</strain>
    </source>
</reference>
<gene>
    <name evidence="1" type="primary">rplQ</name>
    <name type="ordered locus">SeD_A3780</name>
</gene>
<sequence>MRHRKSGRQLNRNSSHRQAMFRNMAGSLVRHEIIKTTLPKAKELRRVVEPLITLAKTDSVANRRLAFARTRDNEIVAKLFNELGPRFASRAGGYTRILKCGFRAGDNAPMAYIELVDRSEKTEAAAE</sequence>
<keyword id="KW-0687">Ribonucleoprotein</keyword>
<keyword id="KW-0689">Ribosomal protein</keyword>
<protein>
    <recommendedName>
        <fullName evidence="1">Large ribosomal subunit protein bL17</fullName>
    </recommendedName>
    <alternativeName>
        <fullName evidence="2">50S ribosomal protein L17</fullName>
    </alternativeName>
</protein>
<feature type="chain" id="PRO_1000144476" description="Large ribosomal subunit protein bL17">
    <location>
        <begin position="1"/>
        <end position="127"/>
    </location>
</feature>
<organism>
    <name type="scientific">Salmonella dublin (strain CT_02021853)</name>
    <dbReference type="NCBI Taxonomy" id="439851"/>
    <lineage>
        <taxon>Bacteria</taxon>
        <taxon>Pseudomonadati</taxon>
        <taxon>Pseudomonadota</taxon>
        <taxon>Gammaproteobacteria</taxon>
        <taxon>Enterobacterales</taxon>
        <taxon>Enterobacteriaceae</taxon>
        <taxon>Salmonella</taxon>
    </lineage>
</organism>
<comment type="subunit">
    <text evidence="1">Part of the 50S ribosomal subunit. Contacts protein L32.</text>
</comment>
<comment type="similarity">
    <text evidence="1">Belongs to the bacterial ribosomal protein bL17 family.</text>
</comment>
<accession>B5FJI9</accession>
<dbReference type="EMBL" id="CP001144">
    <property type="protein sequence ID" value="ACH75439.1"/>
    <property type="molecule type" value="Genomic_DNA"/>
</dbReference>
<dbReference type="RefSeq" id="WP_001216370.1">
    <property type="nucleotide sequence ID" value="NC_011205.1"/>
</dbReference>
<dbReference type="SMR" id="B5FJI9"/>
<dbReference type="GeneID" id="89546962"/>
<dbReference type="KEGG" id="sed:SeD_A3780"/>
<dbReference type="HOGENOM" id="CLU_074407_2_0_6"/>
<dbReference type="Proteomes" id="UP000008322">
    <property type="component" value="Chromosome"/>
</dbReference>
<dbReference type="GO" id="GO:0022625">
    <property type="term" value="C:cytosolic large ribosomal subunit"/>
    <property type="evidence" value="ECO:0007669"/>
    <property type="project" value="TreeGrafter"/>
</dbReference>
<dbReference type="GO" id="GO:0003735">
    <property type="term" value="F:structural constituent of ribosome"/>
    <property type="evidence" value="ECO:0007669"/>
    <property type="project" value="InterPro"/>
</dbReference>
<dbReference type="GO" id="GO:0006412">
    <property type="term" value="P:translation"/>
    <property type="evidence" value="ECO:0007669"/>
    <property type="project" value="UniProtKB-UniRule"/>
</dbReference>
<dbReference type="FunFam" id="3.90.1030.10:FF:000001">
    <property type="entry name" value="50S ribosomal protein L17"/>
    <property type="match status" value="1"/>
</dbReference>
<dbReference type="Gene3D" id="3.90.1030.10">
    <property type="entry name" value="Ribosomal protein L17"/>
    <property type="match status" value="1"/>
</dbReference>
<dbReference type="HAMAP" id="MF_01368">
    <property type="entry name" value="Ribosomal_bL17"/>
    <property type="match status" value="1"/>
</dbReference>
<dbReference type="InterPro" id="IPR000456">
    <property type="entry name" value="Ribosomal_bL17"/>
</dbReference>
<dbReference type="InterPro" id="IPR047859">
    <property type="entry name" value="Ribosomal_bL17_CS"/>
</dbReference>
<dbReference type="InterPro" id="IPR036373">
    <property type="entry name" value="Ribosomal_bL17_sf"/>
</dbReference>
<dbReference type="NCBIfam" id="TIGR00059">
    <property type="entry name" value="L17"/>
    <property type="match status" value="1"/>
</dbReference>
<dbReference type="PANTHER" id="PTHR14413:SF16">
    <property type="entry name" value="LARGE RIBOSOMAL SUBUNIT PROTEIN BL17M"/>
    <property type="match status" value="1"/>
</dbReference>
<dbReference type="PANTHER" id="PTHR14413">
    <property type="entry name" value="RIBOSOMAL PROTEIN L17"/>
    <property type="match status" value="1"/>
</dbReference>
<dbReference type="Pfam" id="PF01196">
    <property type="entry name" value="Ribosomal_L17"/>
    <property type="match status" value="1"/>
</dbReference>
<dbReference type="SUPFAM" id="SSF64263">
    <property type="entry name" value="Prokaryotic ribosomal protein L17"/>
    <property type="match status" value="1"/>
</dbReference>
<dbReference type="PROSITE" id="PS01167">
    <property type="entry name" value="RIBOSOMAL_L17"/>
    <property type="match status" value="1"/>
</dbReference>
<name>RL17_SALDC</name>
<proteinExistence type="inferred from homology"/>